<organism>
    <name type="scientific">Gibberella zeae (strain ATCC MYA-4620 / CBS 123657 / FGSC 9075 / NRRL 31084 / PH-1)</name>
    <name type="common">Wheat head blight fungus</name>
    <name type="synonym">Fusarium graminearum</name>
    <dbReference type="NCBI Taxonomy" id="229533"/>
    <lineage>
        <taxon>Eukaryota</taxon>
        <taxon>Fungi</taxon>
        <taxon>Dikarya</taxon>
        <taxon>Ascomycota</taxon>
        <taxon>Pezizomycotina</taxon>
        <taxon>Sordariomycetes</taxon>
        <taxon>Hypocreomycetidae</taxon>
        <taxon>Hypocreales</taxon>
        <taxon>Nectriaceae</taxon>
        <taxon>Fusarium</taxon>
    </lineage>
</organism>
<proteinExistence type="inferred from homology"/>
<protein>
    <recommendedName>
        <fullName>Exocyst complex component EXO84</fullName>
    </recommendedName>
</protein>
<feature type="chain" id="PRO_0000118982" description="Exocyst complex component EXO84">
    <location>
        <begin position="1"/>
        <end position="679"/>
    </location>
</feature>
<feature type="region of interest" description="Disordered" evidence="3">
    <location>
        <begin position="1"/>
        <end position="123"/>
    </location>
</feature>
<feature type="region of interest" description="Disordered" evidence="3">
    <location>
        <begin position="214"/>
        <end position="237"/>
    </location>
</feature>
<feature type="coiled-coil region" evidence="2">
    <location>
        <begin position="142"/>
        <end position="208"/>
    </location>
</feature>
<feature type="compositionally biased region" description="Polar residues" evidence="3">
    <location>
        <begin position="74"/>
        <end position="84"/>
    </location>
</feature>
<dbReference type="EMBL" id="DS231668">
    <property type="protein sequence ID" value="ESU16446.1"/>
    <property type="molecule type" value="Genomic_DNA"/>
</dbReference>
<dbReference type="EMBL" id="HG970335">
    <property type="protein sequence ID" value="CEF84904.1"/>
    <property type="molecule type" value="Genomic_DNA"/>
</dbReference>
<dbReference type="RefSeq" id="XP_011327870.1">
    <property type="nucleotide sequence ID" value="XM_011329568.1"/>
</dbReference>
<dbReference type="SMR" id="Q4HYZ2"/>
<dbReference type="FunCoup" id="Q4HYZ2">
    <property type="interactions" value="179"/>
</dbReference>
<dbReference type="STRING" id="229533.Q4HYZ2"/>
<dbReference type="GeneID" id="23556748"/>
<dbReference type="KEGG" id="fgr:FGSG_09816"/>
<dbReference type="VEuPathDB" id="FungiDB:FGRAMPH1_01G26209"/>
<dbReference type="eggNOG" id="KOG2215">
    <property type="taxonomic scope" value="Eukaryota"/>
</dbReference>
<dbReference type="HOGENOM" id="CLU_012488_2_0_1"/>
<dbReference type="InParanoid" id="Q4HYZ2"/>
<dbReference type="OrthoDB" id="70119at110618"/>
<dbReference type="Proteomes" id="UP000070720">
    <property type="component" value="Chromosome 4"/>
</dbReference>
<dbReference type="GO" id="GO:0000145">
    <property type="term" value="C:exocyst"/>
    <property type="evidence" value="ECO:0007669"/>
    <property type="project" value="InterPro"/>
</dbReference>
<dbReference type="GO" id="GO:0030133">
    <property type="term" value="C:transport vesicle"/>
    <property type="evidence" value="ECO:0007669"/>
    <property type="project" value="UniProtKB-SubCell"/>
</dbReference>
<dbReference type="GO" id="GO:0006887">
    <property type="term" value="P:exocytosis"/>
    <property type="evidence" value="ECO:0007669"/>
    <property type="project" value="UniProtKB-KW"/>
</dbReference>
<dbReference type="GO" id="GO:0006893">
    <property type="term" value="P:Golgi to plasma membrane transport"/>
    <property type="evidence" value="ECO:0007669"/>
    <property type="project" value="TreeGrafter"/>
</dbReference>
<dbReference type="GO" id="GO:0015031">
    <property type="term" value="P:protein transport"/>
    <property type="evidence" value="ECO:0007669"/>
    <property type="project" value="UniProtKB-KW"/>
</dbReference>
<dbReference type="FunFam" id="2.30.29.30:FF:000264">
    <property type="entry name" value="Potential exocyst complex component Exo84"/>
    <property type="match status" value="1"/>
</dbReference>
<dbReference type="Gene3D" id="1.20.58.1220">
    <property type="entry name" value="Exo84p, C-terminal helical domain"/>
    <property type="match status" value="1"/>
</dbReference>
<dbReference type="Gene3D" id="1.20.58.1210">
    <property type="entry name" value="Exo84p, N-terminal helical domain"/>
    <property type="match status" value="1"/>
</dbReference>
<dbReference type="Gene3D" id="2.30.29.30">
    <property type="entry name" value="Pleckstrin-homology domain (PH domain)/Phosphotyrosine-binding domain (PTB)"/>
    <property type="match status" value="1"/>
</dbReference>
<dbReference type="InterPro" id="IPR016159">
    <property type="entry name" value="Cullin_repeat-like_dom_sf"/>
</dbReference>
<dbReference type="InterPro" id="IPR033961">
    <property type="entry name" value="Exo84"/>
</dbReference>
<dbReference type="InterPro" id="IPR032403">
    <property type="entry name" value="Exo84_C"/>
</dbReference>
<dbReference type="InterPro" id="IPR042561">
    <property type="entry name" value="Exo84_C_1"/>
</dbReference>
<dbReference type="InterPro" id="IPR042560">
    <property type="entry name" value="Exo84_C_2"/>
</dbReference>
<dbReference type="InterPro" id="IPR011993">
    <property type="entry name" value="PH-like_dom_sf"/>
</dbReference>
<dbReference type="PANTHER" id="PTHR21426">
    <property type="entry name" value="EXOCYST COMPLEX COMPONENT 8"/>
    <property type="match status" value="1"/>
</dbReference>
<dbReference type="PANTHER" id="PTHR21426:SF12">
    <property type="entry name" value="EXOCYST COMPLEX COMPONENT 8"/>
    <property type="match status" value="1"/>
</dbReference>
<dbReference type="Pfam" id="PF16528">
    <property type="entry name" value="Exo84_C"/>
    <property type="match status" value="1"/>
</dbReference>
<dbReference type="Pfam" id="PF25345">
    <property type="entry name" value="PH_EXO84"/>
    <property type="match status" value="1"/>
</dbReference>
<dbReference type="Pfam" id="PF08700">
    <property type="entry name" value="VPS51_Exo84_N"/>
    <property type="match status" value="1"/>
</dbReference>
<dbReference type="SUPFAM" id="SSF74788">
    <property type="entry name" value="Cullin repeat-like"/>
    <property type="match status" value="1"/>
</dbReference>
<reference key="1">
    <citation type="journal article" date="2007" name="Science">
        <title>The Fusarium graminearum genome reveals a link between localized polymorphism and pathogen specialization.</title>
        <authorList>
            <person name="Cuomo C.A."/>
            <person name="Gueldener U."/>
            <person name="Xu J.-R."/>
            <person name="Trail F."/>
            <person name="Turgeon B.G."/>
            <person name="Di Pietro A."/>
            <person name="Walton J.D."/>
            <person name="Ma L.-J."/>
            <person name="Baker S.E."/>
            <person name="Rep M."/>
            <person name="Adam G."/>
            <person name="Antoniw J."/>
            <person name="Baldwin T."/>
            <person name="Calvo S.E."/>
            <person name="Chang Y.-L."/>
            <person name="DeCaprio D."/>
            <person name="Gale L.R."/>
            <person name="Gnerre S."/>
            <person name="Goswami R.S."/>
            <person name="Hammond-Kosack K."/>
            <person name="Harris L.J."/>
            <person name="Hilburn K."/>
            <person name="Kennell J.C."/>
            <person name="Kroken S."/>
            <person name="Magnuson J.K."/>
            <person name="Mannhaupt G."/>
            <person name="Mauceli E.W."/>
            <person name="Mewes H.-W."/>
            <person name="Mitterbauer R."/>
            <person name="Muehlbauer G."/>
            <person name="Muensterkoetter M."/>
            <person name="Nelson D."/>
            <person name="O'Donnell K."/>
            <person name="Ouellet T."/>
            <person name="Qi W."/>
            <person name="Quesneville H."/>
            <person name="Roncero M.I.G."/>
            <person name="Seong K.-Y."/>
            <person name="Tetko I.V."/>
            <person name="Urban M."/>
            <person name="Waalwijk C."/>
            <person name="Ward T.J."/>
            <person name="Yao J."/>
            <person name="Birren B.W."/>
            <person name="Kistler H.C."/>
        </authorList>
    </citation>
    <scope>NUCLEOTIDE SEQUENCE [LARGE SCALE GENOMIC DNA]</scope>
    <source>
        <strain>ATCC MYA-4620 / CBS 123657 / FGSC 9075 / NRRL 31084 / PH-1</strain>
    </source>
</reference>
<reference key="2">
    <citation type="journal article" date="2010" name="Nature">
        <title>Comparative genomics reveals mobile pathogenicity chromosomes in Fusarium.</title>
        <authorList>
            <person name="Ma L.-J."/>
            <person name="van der Does H.C."/>
            <person name="Borkovich K.A."/>
            <person name="Coleman J.J."/>
            <person name="Daboussi M.-J."/>
            <person name="Di Pietro A."/>
            <person name="Dufresne M."/>
            <person name="Freitag M."/>
            <person name="Grabherr M."/>
            <person name="Henrissat B."/>
            <person name="Houterman P.M."/>
            <person name="Kang S."/>
            <person name="Shim W.-B."/>
            <person name="Woloshuk C."/>
            <person name="Xie X."/>
            <person name="Xu J.-R."/>
            <person name="Antoniw J."/>
            <person name="Baker S.E."/>
            <person name="Bluhm B.H."/>
            <person name="Breakspear A."/>
            <person name="Brown D.W."/>
            <person name="Butchko R.A.E."/>
            <person name="Chapman S."/>
            <person name="Coulson R."/>
            <person name="Coutinho P.M."/>
            <person name="Danchin E.G.J."/>
            <person name="Diener A."/>
            <person name="Gale L.R."/>
            <person name="Gardiner D.M."/>
            <person name="Goff S."/>
            <person name="Hammond-Kosack K.E."/>
            <person name="Hilburn K."/>
            <person name="Hua-Van A."/>
            <person name="Jonkers W."/>
            <person name="Kazan K."/>
            <person name="Kodira C.D."/>
            <person name="Koehrsen M."/>
            <person name="Kumar L."/>
            <person name="Lee Y.-H."/>
            <person name="Li L."/>
            <person name="Manners J.M."/>
            <person name="Miranda-Saavedra D."/>
            <person name="Mukherjee M."/>
            <person name="Park G."/>
            <person name="Park J."/>
            <person name="Park S.-Y."/>
            <person name="Proctor R.H."/>
            <person name="Regev A."/>
            <person name="Ruiz-Roldan M.C."/>
            <person name="Sain D."/>
            <person name="Sakthikumar S."/>
            <person name="Sykes S."/>
            <person name="Schwartz D.C."/>
            <person name="Turgeon B.G."/>
            <person name="Wapinski I."/>
            <person name="Yoder O."/>
            <person name="Young S."/>
            <person name="Zeng Q."/>
            <person name="Zhou S."/>
            <person name="Galagan J."/>
            <person name="Cuomo C.A."/>
            <person name="Kistler H.C."/>
            <person name="Rep M."/>
        </authorList>
    </citation>
    <scope>GENOME REANNOTATION</scope>
    <source>
        <strain>ATCC MYA-4620 / CBS 123657 / FGSC 9075 / NRRL 31084 / PH-1</strain>
    </source>
</reference>
<reference key="3">
    <citation type="journal article" date="2015" name="BMC Genomics">
        <title>The completed genome sequence of the pathogenic ascomycete fungus Fusarium graminearum.</title>
        <authorList>
            <person name="King R."/>
            <person name="Urban M."/>
            <person name="Hammond-Kosack M.C.U."/>
            <person name="Hassani-Pak K."/>
            <person name="Hammond-Kosack K.E."/>
        </authorList>
    </citation>
    <scope>NUCLEOTIDE SEQUENCE [LARGE SCALE GENOMIC DNA]</scope>
    <source>
        <strain>ATCC MYA-4620 / CBS 123657 / FGSC 9075 / NRRL 31084 / PH-1</strain>
    </source>
</reference>
<evidence type="ECO:0000250" key="1"/>
<evidence type="ECO:0000255" key="2"/>
<evidence type="ECO:0000256" key="3">
    <source>
        <dbReference type="SAM" id="MobiDB-lite"/>
    </source>
</evidence>
<evidence type="ECO:0000305" key="4"/>
<gene>
    <name type="primary">EXO84</name>
    <name type="ORF">FGRRES_09816</name>
    <name type="ORF">FGSG_09816</name>
</gene>
<accession>Q4HYZ2</accession>
<accession>A0A0E0SEP1</accession>
<accession>V6RPQ4</accession>
<keyword id="KW-0175">Coiled coil</keyword>
<keyword id="KW-0968">Cytoplasmic vesicle</keyword>
<keyword id="KW-0268">Exocytosis</keyword>
<keyword id="KW-0653">Protein transport</keyword>
<keyword id="KW-1185">Reference proteome</keyword>
<keyword id="KW-0813">Transport</keyword>
<name>EXO84_GIBZE</name>
<comment type="function">
    <text evidence="1">Involved in the secretory pathway as part of the exocyst complex which tethers secretory vesicles to the sites of exocytosis. Plays a role in both the assembly of the exocyst and the polarization of this complex to specific sites of the plasma membrane for exocytosis. Also involved in assembly of the spliceosome (By similarity).</text>
</comment>
<comment type="subunit">
    <text evidence="1">Component of the exocyst complex.</text>
</comment>
<comment type="subcellular location">
    <subcellularLocation>
        <location evidence="1">Cytoplasmic vesicle</location>
        <location evidence="1">Secretory vesicle</location>
    </subcellularLocation>
    <text evidence="1">Cell periphery. The polarization of EXO84 requires actin cables (By similarity).</text>
</comment>
<comment type="similarity">
    <text evidence="4">Belongs to the EXO84 family.</text>
</comment>
<sequence length="679" mass="76462">MEDRNKISLRSGRRKKRPTISAPRQISGPIAQDDSNRPPLPGADPSQASAQPRPRPPPMAGGKTSDLVKRRYSTRFNQPSSISNGGAPPMPQMPSLANYEPRETVAAARKPPSRSGPGVAPVIDIKGLRDPKLKPDRYVQAALSDATEDQIREFEESLRQVKTRVGTDLQQSVMQNRTQFIKISKEAEKLKSEMRNLKNFMSELKVNTTAMRAAAAKSDEPMPSDLGVAPGISSRRDRRTSIADRSAMWNSQMQALYKGVEGSQKFLPNAVGRHVVQDAGPWIELDNATYKSRRAMQIFLLNDHLLIASRKKRKADAPGADARGPMMKLVADRCWPLLDVEVVDMSSTGESSNSGRNKLADAIMVRGVGQESFIYRTEKPQDPEKKQLLLNVRKAIEQLRKGLRSEMEANNKARETINYFASRDPGLLQKTELLATLSDIKDMLIEVDGKQQNLRWVESEMDDLDIDVAMQRFEDAVVRVEKLKAIARGLKNHAIAQDFINFKVNERCVRLANMIGRELEMTHDNNTKTRRNVSWLTRLGFEDSARESYLAARSGTIHKRTRQCIFQGDLHLYIWELSFVYFMVIHNTVQCFQSCFPPPMMSVCVKWAKEEVDAFNIILARQLSSTELRGQVWTQCMERAKEHSKLLSEVGLDFENLVGKNLMIYEPIDQGPSVGLGLS</sequence>